<accession>Q46IR9</accession>
<dbReference type="EMBL" id="CP000095">
    <property type="protein sequence ID" value="AAZ58609.1"/>
    <property type="molecule type" value="Genomic_DNA"/>
</dbReference>
<dbReference type="RefSeq" id="WP_011295463.1">
    <property type="nucleotide sequence ID" value="NC_007335.2"/>
</dbReference>
<dbReference type="SMR" id="Q46IR9"/>
<dbReference type="STRING" id="59920.PMN2A_1119"/>
<dbReference type="KEGG" id="pmn:PMN2A_1119"/>
<dbReference type="HOGENOM" id="CLU_095071_2_1_3"/>
<dbReference type="OrthoDB" id="9806379at2"/>
<dbReference type="PhylomeDB" id="Q46IR9"/>
<dbReference type="Proteomes" id="UP000002535">
    <property type="component" value="Chromosome"/>
</dbReference>
<dbReference type="GO" id="GO:0022625">
    <property type="term" value="C:cytosolic large ribosomal subunit"/>
    <property type="evidence" value="ECO:0007669"/>
    <property type="project" value="TreeGrafter"/>
</dbReference>
<dbReference type="GO" id="GO:0070180">
    <property type="term" value="F:large ribosomal subunit rRNA binding"/>
    <property type="evidence" value="ECO:0007669"/>
    <property type="project" value="TreeGrafter"/>
</dbReference>
<dbReference type="GO" id="GO:0003735">
    <property type="term" value="F:structural constituent of ribosome"/>
    <property type="evidence" value="ECO:0007669"/>
    <property type="project" value="InterPro"/>
</dbReference>
<dbReference type="GO" id="GO:0006412">
    <property type="term" value="P:translation"/>
    <property type="evidence" value="ECO:0007669"/>
    <property type="project" value="UniProtKB-UniRule"/>
</dbReference>
<dbReference type="CDD" id="cd00337">
    <property type="entry name" value="Ribosomal_uL14"/>
    <property type="match status" value="1"/>
</dbReference>
<dbReference type="FunFam" id="2.40.150.20:FF:000001">
    <property type="entry name" value="50S ribosomal protein L14"/>
    <property type="match status" value="1"/>
</dbReference>
<dbReference type="Gene3D" id="2.40.150.20">
    <property type="entry name" value="Ribosomal protein L14"/>
    <property type="match status" value="1"/>
</dbReference>
<dbReference type="HAMAP" id="MF_01367">
    <property type="entry name" value="Ribosomal_uL14"/>
    <property type="match status" value="1"/>
</dbReference>
<dbReference type="InterPro" id="IPR000218">
    <property type="entry name" value="Ribosomal_uL14"/>
</dbReference>
<dbReference type="InterPro" id="IPR005745">
    <property type="entry name" value="Ribosomal_uL14_bac-type"/>
</dbReference>
<dbReference type="InterPro" id="IPR036853">
    <property type="entry name" value="Ribosomal_uL14_sf"/>
</dbReference>
<dbReference type="NCBIfam" id="TIGR01067">
    <property type="entry name" value="rplN_bact"/>
    <property type="match status" value="1"/>
</dbReference>
<dbReference type="PANTHER" id="PTHR11761">
    <property type="entry name" value="50S/60S RIBOSOMAL PROTEIN L14/L23"/>
    <property type="match status" value="1"/>
</dbReference>
<dbReference type="PANTHER" id="PTHR11761:SF3">
    <property type="entry name" value="LARGE RIBOSOMAL SUBUNIT PROTEIN UL14M"/>
    <property type="match status" value="1"/>
</dbReference>
<dbReference type="Pfam" id="PF00238">
    <property type="entry name" value="Ribosomal_L14"/>
    <property type="match status" value="1"/>
</dbReference>
<dbReference type="SMART" id="SM01374">
    <property type="entry name" value="Ribosomal_L14"/>
    <property type="match status" value="1"/>
</dbReference>
<dbReference type="SUPFAM" id="SSF50193">
    <property type="entry name" value="Ribosomal protein L14"/>
    <property type="match status" value="1"/>
</dbReference>
<feature type="chain" id="PRO_1000055673" description="Large ribosomal subunit protein uL14">
    <location>
        <begin position="1"/>
        <end position="121"/>
    </location>
</feature>
<protein>
    <recommendedName>
        <fullName evidence="1">Large ribosomal subunit protein uL14</fullName>
    </recommendedName>
    <alternativeName>
        <fullName evidence="2">50S ribosomal protein L14</fullName>
    </alternativeName>
</protein>
<proteinExistence type="inferred from homology"/>
<comment type="function">
    <text evidence="1">Binds to 23S rRNA. Forms part of two intersubunit bridges in the 70S ribosome.</text>
</comment>
<comment type="subunit">
    <text evidence="1">Part of the 50S ribosomal subunit. Forms a cluster with proteins L3 and L19. In the 70S ribosome, L14 and L19 interact and together make contacts with the 16S rRNA in bridges B5 and B8.</text>
</comment>
<comment type="similarity">
    <text evidence="1">Belongs to the universal ribosomal protein uL14 family.</text>
</comment>
<evidence type="ECO:0000255" key="1">
    <source>
        <dbReference type="HAMAP-Rule" id="MF_01367"/>
    </source>
</evidence>
<evidence type="ECO:0000305" key="2"/>
<organism>
    <name type="scientific">Prochlorococcus marinus (strain NATL2A)</name>
    <dbReference type="NCBI Taxonomy" id="59920"/>
    <lineage>
        <taxon>Bacteria</taxon>
        <taxon>Bacillati</taxon>
        <taxon>Cyanobacteriota</taxon>
        <taxon>Cyanophyceae</taxon>
        <taxon>Synechococcales</taxon>
        <taxon>Prochlorococcaceae</taxon>
        <taxon>Prochlorococcus</taxon>
    </lineage>
</organism>
<name>RL14_PROMT</name>
<reference key="1">
    <citation type="journal article" date="2007" name="PLoS Genet.">
        <title>Patterns and implications of gene gain and loss in the evolution of Prochlorococcus.</title>
        <authorList>
            <person name="Kettler G.C."/>
            <person name="Martiny A.C."/>
            <person name="Huang K."/>
            <person name="Zucker J."/>
            <person name="Coleman M.L."/>
            <person name="Rodrigue S."/>
            <person name="Chen F."/>
            <person name="Lapidus A."/>
            <person name="Ferriera S."/>
            <person name="Johnson J."/>
            <person name="Steglich C."/>
            <person name="Church G.M."/>
            <person name="Richardson P."/>
            <person name="Chisholm S.W."/>
        </authorList>
    </citation>
    <scope>NUCLEOTIDE SEQUENCE [LARGE SCALE GENOMIC DNA]</scope>
    <source>
        <strain>NATL2A</strain>
    </source>
</reference>
<sequence length="121" mass="13438">MIQQETFLTVADNSGAKRLQCIRVLGSNRRYAHVGDVIVASVKDAMPNMGVKKSDVVKAVVVRTRATMRRETGNSIRFDDNAAVLINDDQNPRGTRVFGPVARELRERNFTKIVSLAPEVI</sequence>
<keyword id="KW-1185">Reference proteome</keyword>
<keyword id="KW-0687">Ribonucleoprotein</keyword>
<keyword id="KW-0689">Ribosomal protein</keyword>
<keyword id="KW-0694">RNA-binding</keyword>
<keyword id="KW-0699">rRNA-binding</keyword>
<gene>
    <name evidence="1" type="primary">rplN</name>
    <name evidence="1" type="synonym">rpl14</name>
    <name type="ordered locus">PMN2A_1119</name>
</gene>